<protein>
    <recommendedName>
        <fullName evidence="1">Tyrosine--tRNA ligase</fullName>
        <ecNumber evidence="1">6.1.1.1</ecNumber>
    </recommendedName>
    <alternativeName>
        <fullName evidence="1">Tyrosyl-tRNA synthetase</fullName>
        <shortName evidence="1">TyrRS</shortName>
    </alternativeName>
</protein>
<sequence>MEHALQEIKRGADELLVEAELVEKLKTGRPLRIKAGFDPTAPDLHLGHTVLLNKLRQFQVLGHRIVFLIGDFTGMIGDPTGKNATRPPLTREAVAENAKTYQEQVFKVLDPALTEVRFNSEWMEGLGSVGMIRLAATHTVARMLERDDFQKRYSSQKPIAIHEFLYPLIQGYDSVELKADVELGGTDQKFNLLMGRELQKHYGQPPQCILTMPLLEGTDGVNKMSKSLGNYIGINEAPGQIFGKLMSISDALMWRYIDLLSFESIARIEGWRSDVAAGLNPREVKVAFAQEIVGRFHGDKAARDAVAEFEARFQRGVLPDDMPEVDLHGIDGGLPVPQLLKQAGLVSSTSDAIRQIAGGGVRLDGERVTDKGQSVPAGATVVAQVGKRKFARVTVI</sequence>
<reference key="1">
    <citation type="journal article" date="2006" name="J. Bacteriol.">
        <title>The genome sequence of the obligately chemolithoautotrophic, facultatively anaerobic bacterium Thiobacillus denitrificans.</title>
        <authorList>
            <person name="Beller H.R."/>
            <person name="Chain P.S."/>
            <person name="Letain T.E."/>
            <person name="Chakicherla A."/>
            <person name="Larimer F.W."/>
            <person name="Richardson P.M."/>
            <person name="Coleman M.A."/>
            <person name="Wood A.P."/>
            <person name="Kelly D.P."/>
        </authorList>
    </citation>
    <scope>NUCLEOTIDE SEQUENCE [LARGE SCALE GENOMIC DNA]</scope>
    <source>
        <strain>ATCC 25259 / T1</strain>
    </source>
</reference>
<proteinExistence type="inferred from homology"/>
<evidence type="ECO:0000255" key="1">
    <source>
        <dbReference type="HAMAP-Rule" id="MF_02007"/>
    </source>
</evidence>
<keyword id="KW-0030">Aminoacyl-tRNA synthetase</keyword>
<keyword id="KW-0067">ATP-binding</keyword>
<keyword id="KW-0963">Cytoplasm</keyword>
<keyword id="KW-0436">Ligase</keyword>
<keyword id="KW-0547">Nucleotide-binding</keyword>
<keyword id="KW-0648">Protein biosynthesis</keyword>
<keyword id="KW-1185">Reference proteome</keyword>
<keyword id="KW-0694">RNA-binding</keyword>
<organism>
    <name type="scientific">Thiobacillus denitrificans (strain ATCC 25259 / T1)</name>
    <dbReference type="NCBI Taxonomy" id="292415"/>
    <lineage>
        <taxon>Bacteria</taxon>
        <taxon>Pseudomonadati</taxon>
        <taxon>Pseudomonadota</taxon>
        <taxon>Betaproteobacteria</taxon>
        <taxon>Nitrosomonadales</taxon>
        <taxon>Thiobacillaceae</taxon>
        <taxon>Thiobacillus</taxon>
    </lineage>
</organism>
<accession>Q3SLJ8</accession>
<comment type="function">
    <text evidence="1">Catalyzes the attachment of tyrosine to tRNA(Tyr) in a two-step reaction: tyrosine is first activated by ATP to form Tyr-AMP and then transferred to the acceptor end of tRNA(Tyr).</text>
</comment>
<comment type="catalytic activity">
    <reaction evidence="1">
        <text>tRNA(Tyr) + L-tyrosine + ATP = L-tyrosyl-tRNA(Tyr) + AMP + diphosphate + H(+)</text>
        <dbReference type="Rhea" id="RHEA:10220"/>
        <dbReference type="Rhea" id="RHEA-COMP:9706"/>
        <dbReference type="Rhea" id="RHEA-COMP:9707"/>
        <dbReference type="ChEBI" id="CHEBI:15378"/>
        <dbReference type="ChEBI" id="CHEBI:30616"/>
        <dbReference type="ChEBI" id="CHEBI:33019"/>
        <dbReference type="ChEBI" id="CHEBI:58315"/>
        <dbReference type="ChEBI" id="CHEBI:78442"/>
        <dbReference type="ChEBI" id="CHEBI:78536"/>
        <dbReference type="ChEBI" id="CHEBI:456215"/>
        <dbReference type="EC" id="6.1.1.1"/>
    </reaction>
</comment>
<comment type="subunit">
    <text evidence="1">Homodimer.</text>
</comment>
<comment type="subcellular location">
    <subcellularLocation>
        <location evidence="1">Cytoplasm</location>
    </subcellularLocation>
</comment>
<comment type="similarity">
    <text evidence="1">Belongs to the class-I aminoacyl-tRNA synthetase family. TyrS type 2 subfamily.</text>
</comment>
<gene>
    <name evidence="1" type="primary">tyrS</name>
    <name type="ordered locus">Tbd_0459</name>
</gene>
<name>SYY_THIDA</name>
<dbReference type="EC" id="6.1.1.1" evidence="1"/>
<dbReference type="EMBL" id="CP000116">
    <property type="protein sequence ID" value="AAZ96412.1"/>
    <property type="molecule type" value="Genomic_DNA"/>
</dbReference>
<dbReference type="RefSeq" id="WP_011310971.1">
    <property type="nucleotide sequence ID" value="NC_007404.1"/>
</dbReference>
<dbReference type="SMR" id="Q3SLJ8"/>
<dbReference type="STRING" id="292415.Tbd_0459"/>
<dbReference type="KEGG" id="tbd:Tbd_0459"/>
<dbReference type="eggNOG" id="COG0162">
    <property type="taxonomic scope" value="Bacteria"/>
</dbReference>
<dbReference type="HOGENOM" id="CLU_024003_5_0_4"/>
<dbReference type="OrthoDB" id="9804243at2"/>
<dbReference type="Proteomes" id="UP000008291">
    <property type="component" value="Chromosome"/>
</dbReference>
<dbReference type="GO" id="GO:0005829">
    <property type="term" value="C:cytosol"/>
    <property type="evidence" value="ECO:0007669"/>
    <property type="project" value="TreeGrafter"/>
</dbReference>
<dbReference type="GO" id="GO:0005524">
    <property type="term" value="F:ATP binding"/>
    <property type="evidence" value="ECO:0007669"/>
    <property type="project" value="UniProtKB-UniRule"/>
</dbReference>
<dbReference type="GO" id="GO:0003723">
    <property type="term" value="F:RNA binding"/>
    <property type="evidence" value="ECO:0007669"/>
    <property type="project" value="UniProtKB-KW"/>
</dbReference>
<dbReference type="GO" id="GO:0004831">
    <property type="term" value="F:tyrosine-tRNA ligase activity"/>
    <property type="evidence" value="ECO:0007669"/>
    <property type="project" value="UniProtKB-UniRule"/>
</dbReference>
<dbReference type="GO" id="GO:0006437">
    <property type="term" value="P:tyrosyl-tRNA aminoacylation"/>
    <property type="evidence" value="ECO:0007669"/>
    <property type="project" value="UniProtKB-UniRule"/>
</dbReference>
<dbReference type="CDD" id="cd00805">
    <property type="entry name" value="TyrRS_core"/>
    <property type="match status" value="1"/>
</dbReference>
<dbReference type="FunFam" id="1.10.240.10:FF:000006">
    <property type="entry name" value="Tyrosine--tRNA ligase"/>
    <property type="match status" value="1"/>
</dbReference>
<dbReference type="FunFam" id="3.10.290.10:FF:000022">
    <property type="entry name" value="Tyrosine--tRNA ligase"/>
    <property type="match status" value="1"/>
</dbReference>
<dbReference type="FunFam" id="3.40.50.620:FF:000061">
    <property type="entry name" value="Tyrosine--tRNA ligase"/>
    <property type="match status" value="1"/>
</dbReference>
<dbReference type="Gene3D" id="3.40.50.620">
    <property type="entry name" value="HUPs"/>
    <property type="match status" value="1"/>
</dbReference>
<dbReference type="Gene3D" id="3.10.290.10">
    <property type="entry name" value="RNA-binding S4 domain"/>
    <property type="match status" value="1"/>
</dbReference>
<dbReference type="Gene3D" id="1.10.240.10">
    <property type="entry name" value="Tyrosyl-Transfer RNA Synthetase"/>
    <property type="match status" value="1"/>
</dbReference>
<dbReference type="HAMAP" id="MF_02007">
    <property type="entry name" value="Tyr_tRNA_synth_type2"/>
    <property type="match status" value="1"/>
</dbReference>
<dbReference type="InterPro" id="IPR001412">
    <property type="entry name" value="aa-tRNA-synth_I_CS"/>
</dbReference>
<dbReference type="InterPro" id="IPR002305">
    <property type="entry name" value="aa-tRNA-synth_Ic"/>
</dbReference>
<dbReference type="InterPro" id="IPR014729">
    <property type="entry name" value="Rossmann-like_a/b/a_fold"/>
</dbReference>
<dbReference type="InterPro" id="IPR002942">
    <property type="entry name" value="S4_RNA-bd"/>
</dbReference>
<dbReference type="InterPro" id="IPR036986">
    <property type="entry name" value="S4_RNA-bd_sf"/>
</dbReference>
<dbReference type="InterPro" id="IPR002307">
    <property type="entry name" value="Tyr-tRNA-ligase"/>
</dbReference>
<dbReference type="InterPro" id="IPR024088">
    <property type="entry name" value="Tyr-tRNA-ligase_bac-type"/>
</dbReference>
<dbReference type="InterPro" id="IPR024108">
    <property type="entry name" value="Tyr-tRNA-ligase_bac_2"/>
</dbReference>
<dbReference type="NCBIfam" id="TIGR00234">
    <property type="entry name" value="tyrS"/>
    <property type="match status" value="1"/>
</dbReference>
<dbReference type="PANTHER" id="PTHR11766:SF1">
    <property type="entry name" value="TYROSINE--TRNA LIGASE"/>
    <property type="match status" value="1"/>
</dbReference>
<dbReference type="PANTHER" id="PTHR11766">
    <property type="entry name" value="TYROSYL-TRNA SYNTHETASE"/>
    <property type="match status" value="1"/>
</dbReference>
<dbReference type="Pfam" id="PF01479">
    <property type="entry name" value="S4"/>
    <property type="match status" value="1"/>
</dbReference>
<dbReference type="Pfam" id="PF00579">
    <property type="entry name" value="tRNA-synt_1b"/>
    <property type="match status" value="1"/>
</dbReference>
<dbReference type="PRINTS" id="PR01040">
    <property type="entry name" value="TRNASYNTHTYR"/>
</dbReference>
<dbReference type="SMART" id="SM00363">
    <property type="entry name" value="S4"/>
    <property type="match status" value="1"/>
</dbReference>
<dbReference type="SUPFAM" id="SSF55174">
    <property type="entry name" value="Alpha-L RNA-binding motif"/>
    <property type="match status" value="1"/>
</dbReference>
<dbReference type="SUPFAM" id="SSF52374">
    <property type="entry name" value="Nucleotidylyl transferase"/>
    <property type="match status" value="1"/>
</dbReference>
<dbReference type="PROSITE" id="PS00178">
    <property type="entry name" value="AA_TRNA_LIGASE_I"/>
    <property type="match status" value="1"/>
</dbReference>
<dbReference type="PROSITE" id="PS50889">
    <property type="entry name" value="S4"/>
    <property type="match status" value="1"/>
</dbReference>
<feature type="chain" id="PRO_0000236773" description="Tyrosine--tRNA ligase">
    <location>
        <begin position="1"/>
        <end position="396"/>
    </location>
</feature>
<feature type="domain" description="S4 RNA-binding" evidence="1">
    <location>
        <begin position="334"/>
        <end position="395"/>
    </location>
</feature>
<feature type="short sequence motif" description="'HIGH' region">
    <location>
        <begin position="39"/>
        <end position="48"/>
    </location>
</feature>
<feature type="short sequence motif" description="'KMSKS' region">
    <location>
        <begin position="223"/>
        <end position="227"/>
    </location>
</feature>
<feature type="binding site" evidence="1">
    <location>
        <position position="226"/>
    </location>
    <ligand>
        <name>ATP</name>
        <dbReference type="ChEBI" id="CHEBI:30616"/>
    </ligand>
</feature>